<accession>P0CT09</accession>
<accession>G4N017</accession>
<accession>Q5EN00</accession>
<name>END3_PYRO7</name>
<organism>
    <name type="scientific">Pyricularia oryzae (strain 70-15 / ATCC MYA-4617 / FGSC 8958)</name>
    <name type="common">Rice blast fungus</name>
    <name type="synonym">Magnaporthe oryzae</name>
    <dbReference type="NCBI Taxonomy" id="242507"/>
    <lineage>
        <taxon>Eukaryota</taxon>
        <taxon>Fungi</taxon>
        <taxon>Dikarya</taxon>
        <taxon>Ascomycota</taxon>
        <taxon>Pezizomycotina</taxon>
        <taxon>Sordariomycetes</taxon>
        <taxon>Sordariomycetidae</taxon>
        <taxon>Magnaporthales</taxon>
        <taxon>Pyriculariaceae</taxon>
        <taxon>Pyricularia</taxon>
    </lineage>
</organism>
<dbReference type="EMBL" id="CM001233">
    <property type="protein sequence ID" value="EHA52255.1"/>
    <property type="molecule type" value="Genomic_DNA"/>
</dbReference>
<dbReference type="RefSeq" id="XP_003712062.1">
    <property type="nucleotide sequence ID" value="XM_003712014.1"/>
</dbReference>
<dbReference type="FunCoup" id="P0CT09">
    <property type="interactions" value="96"/>
</dbReference>
<dbReference type="STRING" id="242507.P0CT09"/>
<dbReference type="EnsemblFungi" id="MGG_06180T0">
    <property type="protein sequence ID" value="MGG_06180T0"/>
    <property type="gene ID" value="MGG_06180"/>
</dbReference>
<dbReference type="GeneID" id="2684310"/>
<dbReference type="KEGG" id="mgr:MGG_06180"/>
<dbReference type="VEuPathDB" id="FungiDB:MGG_06180"/>
<dbReference type="eggNOG" id="KOG0998">
    <property type="taxonomic scope" value="Eukaryota"/>
</dbReference>
<dbReference type="HOGENOM" id="CLU_040829_0_0_1"/>
<dbReference type="InParanoid" id="P0CT09"/>
<dbReference type="OMA" id="DWLIPES"/>
<dbReference type="OrthoDB" id="1716625at2759"/>
<dbReference type="PHI-base" id="PHI:7223"/>
<dbReference type="Proteomes" id="UP000009058">
    <property type="component" value="Chromosome 3"/>
</dbReference>
<dbReference type="GO" id="GO:0030479">
    <property type="term" value="C:actin cortical patch"/>
    <property type="evidence" value="ECO:0007669"/>
    <property type="project" value="UniProtKB-SubCell"/>
</dbReference>
<dbReference type="GO" id="GO:0010008">
    <property type="term" value="C:endosome membrane"/>
    <property type="evidence" value="ECO:0007669"/>
    <property type="project" value="UniProtKB-SubCell"/>
</dbReference>
<dbReference type="GO" id="GO:0005886">
    <property type="term" value="C:plasma membrane"/>
    <property type="evidence" value="ECO:0007669"/>
    <property type="project" value="UniProtKB-SubCell"/>
</dbReference>
<dbReference type="GO" id="GO:0003779">
    <property type="term" value="F:actin binding"/>
    <property type="evidence" value="ECO:0007669"/>
    <property type="project" value="UniProtKB-KW"/>
</dbReference>
<dbReference type="GO" id="GO:0005509">
    <property type="term" value="F:calcium ion binding"/>
    <property type="evidence" value="ECO:0007669"/>
    <property type="project" value="InterPro"/>
</dbReference>
<dbReference type="GO" id="GO:0007015">
    <property type="term" value="P:actin filament organization"/>
    <property type="evidence" value="ECO:0007669"/>
    <property type="project" value="InterPro"/>
</dbReference>
<dbReference type="GO" id="GO:0006897">
    <property type="term" value="P:endocytosis"/>
    <property type="evidence" value="ECO:0007669"/>
    <property type="project" value="UniProtKB-KW"/>
</dbReference>
<dbReference type="GO" id="GO:0016197">
    <property type="term" value="P:endosomal transport"/>
    <property type="evidence" value="ECO:0007669"/>
    <property type="project" value="TreeGrafter"/>
</dbReference>
<dbReference type="CDD" id="cd00052">
    <property type="entry name" value="EH"/>
    <property type="match status" value="1"/>
</dbReference>
<dbReference type="FunFam" id="1.10.238.10:FF:000339">
    <property type="entry name" value="Actin cytoskeleton-regulatory complex protein END3"/>
    <property type="match status" value="1"/>
</dbReference>
<dbReference type="Gene3D" id="1.10.238.10">
    <property type="entry name" value="EF-hand"/>
    <property type="match status" value="2"/>
</dbReference>
<dbReference type="InterPro" id="IPR011992">
    <property type="entry name" value="EF-hand-dom_pair"/>
</dbReference>
<dbReference type="InterPro" id="IPR018247">
    <property type="entry name" value="EF_Hand_1_Ca_BS"/>
</dbReference>
<dbReference type="InterPro" id="IPR002048">
    <property type="entry name" value="EF_hand_dom"/>
</dbReference>
<dbReference type="InterPro" id="IPR000261">
    <property type="entry name" value="EH_dom"/>
</dbReference>
<dbReference type="InterPro" id="IPR025604">
    <property type="entry name" value="End3"/>
</dbReference>
<dbReference type="PANTHER" id="PTHR11216:SF74">
    <property type="entry name" value="ACTIN CYTOSKELETON-REGULATORY COMPLEX PROTEIN END3"/>
    <property type="match status" value="1"/>
</dbReference>
<dbReference type="PANTHER" id="PTHR11216">
    <property type="entry name" value="EH DOMAIN"/>
    <property type="match status" value="1"/>
</dbReference>
<dbReference type="Pfam" id="PF12763">
    <property type="entry name" value="EH"/>
    <property type="match status" value="1"/>
</dbReference>
<dbReference type="Pfam" id="PF12761">
    <property type="entry name" value="End3"/>
    <property type="match status" value="1"/>
</dbReference>
<dbReference type="SMART" id="SM00054">
    <property type="entry name" value="EFh"/>
    <property type="match status" value="1"/>
</dbReference>
<dbReference type="SMART" id="SM00027">
    <property type="entry name" value="EH"/>
    <property type="match status" value="2"/>
</dbReference>
<dbReference type="SUPFAM" id="SSF47473">
    <property type="entry name" value="EF-hand"/>
    <property type="match status" value="2"/>
</dbReference>
<dbReference type="PROSITE" id="PS00018">
    <property type="entry name" value="EF_HAND_1"/>
    <property type="match status" value="1"/>
</dbReference>
<dbReference type="PROSITE" id="PS50222">
    <property type="entry name" value="EF_HAND_2"/>
    <property type="match status" value="1"/>
</dbReference>
<dbReference type="PROSITE" id="PS50031">
    <property type="entry name" value="EH"/>
    <property type="match status" value="2"/>
</dbReference>
<feature type="chain" id="PRO_0000349451" description="Actin cytoskeleton-regulatory complex protein END3">
    <location>
        <begin position="1"/>
        <end position="396"/>
    </location>
</feature>
<feature type="domain" description="EH 1" evidence="3">
    <location>
        <begin position="9"/>
        <end position="99"/>
    </location>
</feature>
<feature type="domain" description="EF-hand" evidence="4">
    <location>
        <begin position="41"/>
        <end position="76"/>
    </location>
</feature>
<feature type="domain" description="EH 2" evidence="3">
    <location>
        <begin position="138"/>
        <end position="226"/>
    </location>
</feature>
<feature type="region of interest" description="Disordered" evidence="5">
    <location>
        <begin position="341"/>
        <end position="396"/>
    </location>
</feature>
<feature type="coiled-coil region" evidence="2">
    <location>
        <begin position="282"/>
        <end position="395"/>
    </location>
</feature>
<feature type="compositionally biased region" description="Basic and acidic residues" evidence="5">
    <location>
        <begin position="380"/>
        <end position="396"/>
    </location>
</feature>
<feature type="binding site" evidence="4">
    <location>
        <position position="54"/>
    </location>
    <ligand>
        <name>Ca(2+)</name>
        <dbReference type="ChEBI" id="CHEBI:29108"/>
    </ligand>
</feature>
<feature type="binding site" evidence="4">
    <location>
        <position position="56"/>
    </location>
    <ligand>
        <name>Ca(2+)</name>
        <dbReference type="ChEBI" id="CHEBI:29108"/>
    </ligand>
</feature>
<feature type="binding site" evidence="4">
    <location>
        <position position="58"/>
    </location>
    <ligand>
        <name>Ca(2+)</name>
        <dbReference type="ChEBI" id="CHEBI:29108"/>
    </ligand>
</feature>
<feature type="binding site" evidence="4">
    <location>
        <position position="60"/>
    </location>
    <ligand>
        <name>Ca(2+)</name>
        <dbReference type="ChEBI" id="CHEBI:29108"/>
    </ligand>
</feature>
<feature type="binding site" evidence="4">
    <location>
        <position position="65"/>
    </location>
    <ligand>
        <name>Ca(2+)</name>
        <dbReference type="ChEBI" id="CHEBI:29108"/>
    </ligand>
</feature>
<reference key="1">
    <citation type="journal article" date="2005" name="Nature">
        <title>The genome sequence of the rice blast fungus Magnaporthe grisea.</title>
        <authorList>
            <person name="Dean R.A."/>
            <person name="Talbot N.J."/>
            <person name="Ebbole D.J."/>
            <person name="Farman M.L."/>
            <person name="Mitchell T.K."/>
            <person name="Orbach M.J."/>
            <person name="Thon M.R."/>
            <person name="Kulkarni R."/>
            <person name="Xu J.-R."/>
            <person name="Pan H."/>
            <person name="Read N.D."/>
            <person name="Lee Y.-H."/>
            <person name="Carbone I."/>
            <person name="Brown D."/>
            <person name="Oh Y.Y."/>
            <person name="Donofrio N."/>
            <person name="Jeong J.S."/>
            <person name="Soanes D.M."/>
            <person name="Djonovic S."/>
            <person name="Kolomiets E."/>
            <person name="Rehmeyer C."/>
            <person name="Li W."/>
            <person name="Harding M."/>
            <person name="Kim S."/>
            <person name="Lebrun M.-H."/>
            <person name="Bohnert H."/>
            <person name="Coughlan S."/>
            <person name="Butler J."/>
            <person name="Calvo S.E."/>
            <person name="Ma L.-J."/>
            <person name="Nicol R."/>
            <person name="Purcell S."/>
            <person name="Nusbaum C."/>
            <person name="Galagan J.E."/>
            <person name="Birren B.W."/>
        </authorList>
    </citation>
    <scope>NUCLEOTIDE SEQUENCE [LARGE SCALE GENOMIC DNA]</scope>
    <source>
        <strain>70-15 / ATCC MYA-4617 / FGSC 8958</strain>
    </source>
</reference>
<gene>
    <name type="primary">END3</name>
    <name type="ORF">MGG_06180</name>
</gene>
<proteinExistence type="inferred from homology"/>
<evidence type="ECO:0000250" key="1"/>
<evidence type="ECO:0000255" key="2"/>
<evidence type="ECO:0000255" key="3">
    <source>
        <dbReference type="PROSITE-ProRule" id="PRU00077"/>
    </source>
</evidence>
<evidence type="ECO:0000255" key="4">
    <source>
        <dbReference type="PROSITE-ProRule" id="PRU00448"/>
    </source>
</evidence>
<evidence type="ECO:0000256" key="5">
    <source>
        <dbReference type="SAM" id="MobiDB-lite"/>
    </source>
</evidence>
<evidence type="ECO:0000305" key="6"/>
<comment type="function">
    <text evidence="1">Component of the PAN1 actin cytoskeleton-regulatory complex required for the internalization of endosomes during actin-coupled endocytosis. The complex links the site of endocytosis to the cell membrane-associated actin cytoskeleton. Mediates uptake of external molecules and vacuolar degradation of plasma membrane proteins. Plays a role in the proper organization of the cell membrane-associated actin cytoskeleton and promotes its destabilization (By similarity).</text>
</comment>
<comment type="subunit">
    <text evidence="1">Component of the PAN1 actin cytoskeleton-regulatory complex.</text>
</comment>
<comment type="subcellular location">
    <subcellularLocation>
        <location evidence="1">Cell membrane</location>
        <topology evidence="1">Peripheral membrane protein</topology>
        <orientation evidence="1">Cytoplasmic side</orientation>
    </subcellularLocation>
    <subcellularLocation>
        <location evidence="1">Endosome membrane</location>
        <topology evidence="1">Peripheral membrane protein</topology>
        <orientation evidence="1">Cytoplasmic side</orientation>
    </subcellularLocation>
    <subcellularLocation>
        <location evidence="1">Cytoplasm</location>
        <location evidence="1">Cytoskeleton</location>
        <location evidence="1">Actin patch</location>
    </subcellularLocation>
    <text evidence="1">Cytoplasmic and cortical actin patches.</text>
</comment>
<comment type="similarity">
    <text evidence="6">Belongs to the END3 family.</text>
</comment>
<sequence length="396" mass="44920">MAPRIEAQEIETYWNIFSARTNGSKFLTGEQAAPVLKNSGLRDDQLERVWDLADVDNDGNLDFEEFCVAMRVIFDILNGEHADVPSTLPDWLVPESKAHLVQANRALTGKQVQFERVDDDPDSPGLKDGFDWYMSPADKSKYESIYQENRDMRGEVSFGALEDLYESLDVPDTDIRSAWNLINPSAGPTINKDACLAFLHILNYRHEGYRIPRTVPASLRASFERNKIDYQVDKQAASRWATKADDETSTGRKAKFGDQYLTRLGRGSFKTSGTDFSSAQTDSEWEEVRLKKQLAELDAKMASVEADAERRKGGKRDSKPALVKRELEQLLDYKRKQLREIEEGKTKGQGGGSLKGIQDDLQTVREQTDGLASHLRSRQQHLEELRRQIEDEKAGR</sequence>
<keyword id="KW-0009">Actin-binding</keyword>
<keyword id="KW-0106">Calcium</keyword>
<keyword id="KW-1003">Cell membrane</keyword>
<keyword id="KW-0175">Coiled coil</keyword>
<keyword id="KW-0963">Cytoplasm</keyword>
<keyword id="KW-0206">Cytoskeleton</keyword>
<keyword id="KW-0254">Endocytosis</keyword>
<keyword id="KW-0967">Endosome</keyword>
<keyword id="KW-0472">Membrane</keyword>
<keyword id="KW-0479">Metal-binding</keyword>
<keyword id="KW-1185">Reference proteome</keyword>
<keyword id="KW-0677">Repeat</keyword>
<protein>
    <recommendedName>
        <fullName>Actin cytoskeleton-regulatory complex protein END3</fullName>
    </recommendedName>
    <alternativeName>
        <fullName>Endocytosis protein 3</fullName>
    </alternativeName>
</protein>